<comment type="function">
    <text evidence="3 4">Polyphosphatase (polyPase) involved in the degradation of inorganic polyphosphates (polyP) that is able to degrade a range of chains from three to several hundreds of residues in a highly processive manner (PubMed:7860598). Exclusively shows exopolyphosphatase activity, cleaving inside the polyP chain (PubMed:31175919).</text>
</comment>
<comment type="catalytic activity">
    <reaction evidence="3 4">
        <text>[phosphate](n) + H2O = [phosphate](n-1) + phosphate + H(+)</text>
        <dbReference type="Rhea" id="RHEA:21528"/>
        <dbReference type="Rhea" id="RHEA-COMP:9859"/>
        <dbReference type="Rhea" id="RHEA-COMP:14279"/>
        <dbReference type="ChEBI" id="CHEBI:15377"/>
        <dbReference type="ChEBI" id="CHEBI:15378"/>
        <dbReference type="ChEBI" id="CHEBI:16838"/>
        <dbReference type="ChEBI" id="CHEBI:43474"/>
        <dbReference type="EC" id="3.6.1.11"/>
    </reaction>
    <physiologicalReaction direction="left-to-right" evidence="3">
        <dbReference type="Rhea" id="RHEA:21529"/>
    </physiologicalReaction>
</comment>
<comment type="cofactor">
    <cofactor evidence="2">
        <name>Mn(2+)</name>
        <dbReference type="ChEBI" id="CHEBI:29035"/>
    </cofactor>
    <cofactor evidence="2 3">
        <name>Mg(2+)</name>
        <dbReference type="ChEBI" id="CHEBI:18420"/>
    </cofactor>
</comment>
<comment type="biophysicochemical properties">
    <kinetics>
        <Vmax evidence="3">240.0 umol/min/mg enzyme with polyP(208) as substrate for the exopolyphosphatase reaction</Vmax>
    </kinetics>
</comment>
<comment type="miscellaneous">
    <text evidence="1">Present with 3170 molecules/cell in log phase SD medium.</text>
</comment>
<comment type="similarity">
    <text evidence="7">Belongs to the PPase class C family.</text>
</comment>
<reference key="1">
    <citation type="journal article" date="1995" name="J. Bacteriol.">
        <title>The gene for a major exopolyphosphatase of Saccharomyces cerevisiae.</title>
        <authorList>
            <person name="Wurst H."/>
            <person name="Shiba T."/>
            <person name="Kornberg A."/>
        </authorList>
    </citation>
    <scope>NUCLEOTIDE SEQUENCE [GENOMIC DNA]</scope>
    <scope>FUNCTION</scope>
    <scope>CATALYTIC ACTIVITY</scope>
    <source>
        <strain>S288c / SNY243</strain>
    </source>
</reference>
<reference key="2">
    <citation type="journal article" date="1994" name="Science">
        <title>Complete nucleotide sequence of Saccharomyces cerevisiae chromosome VIII.</title>
        <authorList>
            <person name="Johnston M."/>
            <person name="Andrews S."/>
            <person name="Brinkman R."/>
            <person name="Cooper J."/>
            <person name="Ding H."/>
            <person name="Dover J."/>
            <person name="Du Z."/>
            <person name="Favello A."/>
            <person name="Fulton L."/>
            <person name="Gattung S."/>
            <person name="Geisel C."/>
            <person name="Kirsten J."/>
            <person name="Kucaba T."/>
            <person name="Hillier L.W."/>
            <person name="Jier M."/>
            <person name="Johnston L."/>
            <person name="Langston Y."/>
            <person name="Latreille P."/>
            <person name="Louis E.J."/>
            <person name="Macri C."/>
            <person name="Mardis E."/>
            <person name="Menezes S."/>
            <person name="Mouser L."/>
            <person name="Nhan M."/>
            <person name="Rifkin L."/>
            <person name="Riles L."/>
            <person name="St Peter H."/>
            <person name="Trevaskis E."/>
            <person name="Vaughan K."/>
            <person name="Vignati D."/>
            <person name="Wilcox L."/>
            <person name="Wohldman P."/>
            <person name="Waterston R."/>
            <person name="Wilson R."/>
            <person name="Vaudin M."/>
        </authorList>
    </citation>
    <scope>NUCLEOTIDE SEQUENCE [LARGE SCALE GENOMIC DNA]</scope>
    <source>
        <strain>ATCC 204508 / S288c</strain>
    </source>
</reference>
<reference key="3">
    <citation type="journal article" date="2014" name="G3 (Bethesda)">
        <title>The reference genome sequence of Saccharomyces cerevisiae: Then and now.</title>
        <authorList>
            <person name="Engel S.R."/>
            <person name="Dietrich F.S."/>
            <person name="Fisk D.G."/>
            <person name="Binkley G."/>
            <person name="Balakrishnan R."/>
            <person name="Costanzo M.C."/>
            <person name="Dwight S.S."/>
            <person name="Hitz B.C."/>
            <person name="Karra K."/>
            <person name="Nash R.S."/>
            <person name="Weng S."/>
            <person name="Wong E.D."/>
            <person name="Lloyd P."/>
            <person name="Skrzypek M.S."/>
            <person name="Miyasato S.R."/>
            <person name="Simison M."/>
            <person name="Cherry J.M."/>
        </authorList>
    </citation>
    <scope>GENOME REANNOTATION</scope>
    <source>
        <strain>ATCC 204508 / S288c</strain>
    </source>
</reference>
<reference key="4">
    <citation type="journal article" date="2003" name="Nature">
        <title>Global analysis of protein expression in yeast.</title>
        <authorList>
            <person name="Ghaemmaghami S."/>
            <person name="Huh W.-K."/>
            <person name="Bower K."/>
            <person name="Howson R.W."/>
            <person name="Belle A."/>
            <person name="Dephoure N."/>
            <person name="O'Shea E.K."/>
            <person name="Weissman J.S."/>
        </authorList>
    </citation>
    <scope>LEVEL OF PROTEIN EXPRESSION [LARGE SCALE ANALYSIS]</scope>
</reference>
<reference key="5">
    <citation type="journal article" date="2019" name="Biochimie">
        <title>Ppn2 endopolyphosphatase overexpressed in Saccharomyces cerevisiae: Comparison with Ppn1, Ppx1, and Ddp1 polyphosphatases.</title>
        <authorList>
            <person name="Andreeva N."/>
            <person name="Ledova L."/>
            <person name="Ryazanova L."/>
            <person name="Tomashevsky A."/>
            <person name="Kulakovskaya T."/>
            <person name="Eldarov M."/>
        </authorList>
    </citation>
    <scope>FUNCTION</scope>
    <scope>CATALYTIC ACTIVITY</scope>
    <scope>BIOPHYSICOCHEMICAL PROPERTIES</scope>
</reference>
<reference evidence="8 9 10" key="6">
    <citation type="journal article" date="2007" name="J. Mol. Biol.">
        <title>The crystal structure of the cytosolic exopolyphosphatase from Saccharomyces cerevisiae reveals the basis for substrate specificity.</title>
        <authorList>
            <person name="Ugochukwu E."/>
            <person name="Lovering A.L."/>
            <person name="Mather O.C."/>
            <person name="Young T.W."/>
            <person name="White S.A."/>
        </authorList>
    </citation>
    <scope>X-RAY CRYSTALLOGRAPHY (1.60 ANGSTROMS) IN COMPLEX WITH ATP; MAGNESIUM AND MANGANESE</scope>
</reference>
<sequence>MSPLRKTVPEFLAHLKSLPISKIASNDVLTICVGNESADMDSIASAITYSYCQYIYNEGTYSEEKKKGSFIVPIIDIPREDLSLRRDVMYVLEKLKIKEEELFFIEDLKSLKQNVSQGTELNSYLVDNNDTPKNLKNYIDNVVGIIDHHFDLQKHLDAEPRIVKVSGSCSSLVFNYWYEKLQGDREVVMNIAPLLMGAILIDTSNMRRKVEESDKLAIERCQAVLSGAVNEVSAQGLEDSSEFYKEIKSRKNDIKGFSVSDILKKDYKQFNFQGKGHKGLEIGLSSIVKRMSWLFNEHGGEADFVNQCRRFQAERGLDVLVLLTSWRKAGDSHRELVILGDSNVVRELIERVSDKLQLQLFGGNLDGGVAMFKQLNVEATRKQVVPYLEEAYSNLEE</sequence>
<protein>
    <recommendedName>
        <fullName evidence="6">Polyphosphatase</fullName>
        <shortName evidence="6">PolyPase</shortName>
        <ecNumber evidence="4">3.6.1.11</ecNumber>
    </recommendedName>
    <alternativeName>
        <fullName evidence="5">Exopolyphosphatase</fullName>
    </alternativeName>
    <alternativeName>
        <fullName evidence="7">Metaphosphatase</fullName>
    </alternativeName>
</protein>
<dbReference type="EC" id="3.6.1.11" evidence="4"/>
<dbReference type="EMBL" id="L28711">
    <property type="protein sequence ID" value="AAA65933.1"/>
    <property type="molecule type" value="Genomic_DNA"/>
</dbReference>
<dbReference type="EMBL" id="U00030">
    <property type="protein sequence ID" value="AAB68368.1"/>
    <property type="molecule type" value="Genomic_DNA"/>
</dbReference>
<dbReference type="EMBL" id="BK006934">
    <property type="protein sequence ID" value="DAA06894.1"/>
    <property type="molecule type" value="Genomic_DNA"/>
</dbReference>
<dbReference type="PIR" id="S46691">
    <property type="entry name" value="S46691"/>
</dbReference>
<dbReference type="RefSeq" id="NP_012071.1">
    <property type="nucleotide sequence ID" value="NM_001179332.1"/>
</dbReference>
<dbReference type="PDB" id="2QB6">
    <property type="method" value="X-ray"/>
    <property type="resolution" value="1.80 A"/>
    <property type="chains" value="A/B=1-397"/>
</dbReference>
<dbReference type="PDB" id="2QB7">
    <property type="method" value="X-ray"/>
    <property type="resolution" value="1.60 A"/>
    <property type="chains" value="A/B=1-397"/>
</dbReference>
<dbReference type="PDB" id="2QB8">
    <property type="method" value="X-ray"/>
    <property type="resolution" value="1.90 A"/>
    <property type="chains" value="A/B=1-397"/>
</dbReference>
<dbReference type="PDBsum" id="2QB6"/>
<dbReference type="PDBsum" id="2QB7"/>
<dbReference type="PDBsum" id="2QB8"/>
<dbReference type="SMR" id="P38698"/>
<dbReference type="BioGRID" id="36635">
    <property type="interactions" value="201"/>
</dbReference>
<dbReference type="DIP" id="DIP-5633N"/>
<dbReference type="FunCoup" id="P38698">
    <property type="interactions" value="293"/>
</dbReference>
<dbReference type="IntAct" id="P38698">
    <property type="interactions" value="4"/>
</dbReference>
<dbReference type="MINT" id="P38698"/>
<dbReference type="STRING" id="4932.YHR201C"/>
<dbReference type="iPTMnet" id="P38698"/>
<dbReference type="PaxDb" id="4932-YHR201C"/>
<dbReference type="PeptideAtlas" id="P38698"/>
<dbReference type="EnsemblFungi" id="YHR201C_mRNA">
    <property type="protein sequence ID" value="YHR201C"/>
    <property type="gene ID" value="YHR201C"/>
</dbReference>
<dbReference type="GeneID" id="856608"/>
<dbReference type="KEGG" id="sce:YHR201C"/>
<dbReference type="AGR" id="SGD:S000001244"/>
<dbReference type="SGD" id="S000001244">
    <property type="gene designation" value="PPX1"/>
</dbReference>
<dbReference type="VEuPathDB" id="FungiDB:YHR201C"/>
<dbReference type="eggNOG" id="KOG4129">
    <property type="taxonomic scope" value="Eukaryota"/>
</dbReference>
<dbReference type="GeneTree" id="ENSGT00450000040262"/>
<dbReference type="HOGENOM" id="CLU_019358_1_0_1"/>
<dbReference type="InParanoid" id="P38698"/>
<dbReference type="OMA" id="TMTIFFN"/>
<dbReference type="OrthoDB" id="374045at2759"/>
<dbReference type="BioCyc" id="YEAST:YHR201C-MONOMER"/>
<dbReference type="BRENDA" id="3.6.1.11">
    <property type="organism ID" value="984"/>
</dbReference>
<dbReference type="BioGRID-ORCS" id="856608">
    <property type="hits" value="0 hits in 10 CRISPR screens"/>
</dbReference>
<dbReference type="CD-CODE" id="E03F929F">
    <property type="entry name" value="Stress granule"/>
</dbReference>
<dbReference type="EvolutionaryTrace" id="P38698"/>
<dbReference type="PRO" id="PR:P38698"/>
<dbReference type="Proteomes" id="UP000002311">
    <property type="component" value="Chromosome VIII"/>
</dbReference>
<dbReference type="RNAct" id="P38698">
    <property type="molecule type" value="protein"/>
</dbReference>
<dbReference type="GO" id="GO:0005737">
    <property type="term" value="C:cytoplasm"/>
    <property type="evidence" value="ECO:0000314"/>
    <property type="project" value="SGD"/>
</dbReference>
<dbReference type="GO" id="GO:0005524">
    <property type="term" value="F:ATP binding"/>
    <property type="evidence" value="ECO:0007669"/>
    <property type="project" value="UniProtKB-KW"/>
</dbReference>
<dbReference type="GO" id="GO:0004309">
    <property type="term" value="F:exopolyphosphatase activity"/>
    <property type="evidence" value="ECO:0000314"/>
    <property type="project" value="SGD"/>
</dbReference>
<dbReference type="GO" id="GO:0046872">
    <property type="term" value="F:metal ion binding"/>
    <property type="evidence" value="ECO:0007669"/>
    <property type="project" value="UniProtKB-KW"/>
</dbReference>
<dbReference type="GO" id="GO:0006798">
    <property type="term" value="P:polyphosphate catabolic process"/>
    <property type="evidence" value="ECO:0000314"/>
    <property type="project" value="SGD"/>
</dbReference>
<dbReference type="FunFam" id="3.90.1640.10:FF:000011">
    <property type="entry name" value="Exopolyphosphatase"/>
    <property type="match status" value="1"/>
</dbReference>
<dbReference type="FunFam" id="3.10.310.20:FF:000004">
    <property type="entry name" value="PPX1p Exopolyphosphatase"/>
    <property type="match status" value="1"/>
</dbReference>
<dbReference type="Gene3D" id="3.10.310.20">
    <property type="entry name" value="DHHA2 domain"/>
    <property type="match status" value="1"/>
</dbReference>
<dbReference type="Gene3D" id="3.90.1640.10">
    <property type="entry name" value="inorganic pyrophosphatase (n-terminal core)"/>
    <property type="match status" value="1"/>
</dbReference>
<dbReference type="InterPro" id="IPR001667">
    <property type="entry name" value="DDH_dom"/>
</dbReference>
<dbReference type="InterPro" id="IPR038763">
    <property type="entry name" value="DHH_sf"/>
</dbReference>
<dbReference type="InterPro" id="IPR004097">
    <property type="entry name" value="DHHA2"/>
</dbReference>
<dbReference type="InterPro" id="IPR038222">
    <property type="entry name" value="DHHA2_dom_sf"/>
</dbReference>
<dbReference type="PANTHER" id="PTHR12112">
    <property type="entry name" value="BNIP - RELATED"/>
    <property type="match status" value="1"/>
</dbReference>
<dbReference type="PANTHER" id="PTHR12112:SF39">
    <property type="entry name" value="EG:152A3.5 PROTEIN (FBGN0003116_PN PROTEIN)"/>
    <property type="match status" value="1"/>
</dbReference>
<dbReference type="Pfam" id="PF01368">
    <property type="entry name" value="DHH"/>
    <property type="match status" value="1"/>
</dbReference>
<dbReference type="Pfam" id="PF02833">
    <property type="entry name" value="DHHA2"/>
    <property type="match status" value="1"/>
</dbReference>
<dbReference type="SMART" id="SM01131">
    <property type="entry name" value="DHHA2"/>
    <property type="match status" value="1"/>
</dbReference>
<dbReference type="SUPFAM" id="SSF64182">
    <property type="entry name" value="DHH phosphoesterases"/>
    <property type="match status" value="1"/>
</dbReference>
<gene>
    <name evidence="6" type="primary">PPX1</name>
    <name type="ordered locus">YHR201C</name>
</gene>
<proteinExistence type="evidence at protein level"/>
<name>PPX1_YEAST</name>
<keyword id="KW-0002">3D-structure</keyword>
<keyword id="KW-0067">ATP-binding</keyword>
<keyword id="KW-0378">Hydrolase</keyword>
<keyword id="KW-0460">Magnesium</keyword>
<keyword id="KW-0464">Manganese</keyword>
<keyword id="KW-0479">Metal-binding</keyword>
<keyword id="KW-0547">Nucleotide-binding</keyword>
<keyword id="KW-1185">Reference proteome</keyword>
<evidence type="ECO:0000269" key="1">
    <source>
    </source>
</evidence>
<evidence type="ECO:0000269" key="2">
    <source>
    </source>
</evidence>
<evidence type="ECO:0000269" key="3">
    <source>
    </source>
</evidence>
<evidence type="ECO:0000269" key="4">
    <source>
    </source>
</evidence>
<evidence type="ECO:0000303" key="5">
    <source>
    </source>
</evidence>
<evidence type="ECO:0000303" key="6">
    <source>
    </source>
</evidence>
<evidence type="ECO:0000305" key="7"/>
<evidence type="ECO:0007744" key="8">
    <source>
        <dbReference type="PDB" id="2QB6"/>
    </source>
</evidence>
<evidence type="ECO:0007744" key="9">
    <source>
        <dbReference type="PDB" id="2QB7"/>
    </source>
</evidence>
<evidence type="ECO:0007744" key="10">
    <source>
        <dbReference type="PDB" id="2QB8"/>
    </source>
</evidence>
<evidence type="ECO:0007829" key="11">
    <source>
        <dbReference type="PDB" id="2QB7"/>
    </source>
</evidence>
<feature type="chain" id="PRO_0000158601" description="Polyphosphatase">
    <location>
        <begin position="1"/>
        <end position="397"/>
    </location>
</feature>
<feature type="binding site" evidence="10">
    <location>
        <position position="41"/>
    </location>
    <ligand>
        <name>Mg(2+)</name>
        <dbReference type="ChEBI" id="CHEBI:18420"/>
    </ligand>
</feature>
<feature type="binding site" evidence="8">
    <location>
        <position position="41"/>
    </location>
    <ligand>
        <name>Mn(2+)</name>
        <dbReference type="ChEBI" id="CHEBI:29035"/>
    </ligand>
</feature>
<feature type="binding site" evidence="10">
    <location>
        <position position="127"/>
    </location>
    <ligand>
        <name>Mg(2+)</name>
        <dbReference type="ChEBI" id="CHEBI:18420"/>
    </ligand>
</feature>
<feature type="binding site" evidence="8">
    <location>
        <position position="127"/>
    </location>
    <ligand>
        <name>Mn(2+)</name>
        <dbReference type="ChEBI" id="CHEBI:29035"/>
    </ligand>
</feature>
<feature type="binding site" evidence="10">
    <location>
        <position position="148"/>
    </location>
    <ligand>
        <name>Mg(2+)</name>
        <dbReference type="ChEBI" id="CHEBI:18420"/>
    </ligand>
</feature>
<feature type="binding site" evidence="8">
    <location>
        <position position="148"/>
    </location>
    <ligand>
        <name>Mn(2+)</name>
        <dbReference type="ChEBI" id="CHEBI:29035"/>
    </ligand>
</feature>
<feature type="binding site" evidence="10">
    <location>
        <position position="149"/>
    </location>
    <ligand>
        <name>ATP</name>
        <dbReference type="ChEBI" id="CHEBI:30616"/>
    </ligand>
</feature>
<feature type="binding site" evidence="10">
    <location>
        <position position="286"/>
    </location>
    <ligand>
        <name>ATP</name>
        <dbReference type="ChEBI" id="CHEBI:30616"/>
    </ligand>
</feature>
<feature type="binding site" evidence="10">
    <location>
        <position position="381"/>
    </location>
    <ligand>
        <name>ATP</name>
        <dbReference type="ChEBI" id="CHEBI:30616"/>
    </ligand>
</feature>
<feature type="sequence conflict" description="In Ref. 1; AAA65933." evidence="7" ref="1">
    <original>P</original>
    <variation>L</variation>
    <location>
        <position position="193"/>
    </location>
</feature>
<feature type="sequence conflict" description="In Ref. 1; AAA65933." evidence="7" ref="1">
    <original>L</original>
    <variation>F</variation>
    <location>
        <position position="284"/>
    </location>
</feature>
<feature type="helix" evidence="11">
    <location>
        <begin position="8"/>
        <end position="17"/>
    </location>
</feature>
<feature type="helix" evidence="11">
    <location>
        <begin position="20"/>
        <end position="23"/>
    </location>
</feature>
<feature type="strand" evidence="11">
    <location>
        <begin position="28"/>
        <end position="33"/>
    </location>
</feature>
<feature type="helix" evidence="11">
    <location>
        <begin position="40"/>
        <end position="58"/>
    </location>
</feature>
<feature type="helix" evidence="11">
    <location>
        <begin position="60"/>
        <end position="62"/>
    </location>
</feature>
<feature type="strand" evidence="11">
    <location>
        <begin position="63"/>
        <end position="65"/>
    </location>
</feature>
<feature type="strand" evidence="11">
    <location>
        <begin position="72"/>
        <end position="74"/>
    </location>
</feature>
<feature type="helix" evidence="11">
    <location>
        <begin position="79"/>
        <end position="84"/>
    </location>
</feature>
<feature type="helix" evidence="11">
    <location>
        <begin position="86"/>
        <end position="94"/>
    </location>
</feature>
<feature type="helix" evidence="11">
    <location>
        <begin position="99"/>
        <end position="101"/>
    </location>
</feature>
<feature type="helix" evidence="11">
    <location>
        <begin position="105"/>
        <end position="114"/>
    </location>
</feature>
<feature type="strand" evidence="11">
    <location>
        <begin position="120"/>
        <end position="127"/>
    </location>
</feature>
<feature type="helix" evidence="11">
    <location>
        <begin position="133"/>
        <end position="135"/>
    </location>
</feature>
<feature type="turn" evidence="11">
    <location>
        <begin position="136"/>
        <end position="138"/>
    </location>
</feature>
<feature type="strand" evidence="11">
    <location>
        <begin position="141"/>
        <end position="147"/>
    </location>
</feature>
<feature type="strand" evidence="11">
    <location>
        <begin position="159"/>
        <end position="163"/>
    </location>
</feature>
<feature type="helix" evidence="11">
    <location>
        <begin position="169"/>
        <end position="180"/>
    </location>
</feature>
<feature type="turn" evidence="11">
    <location>
        <begin position="181"/>
        <end position="183"/>
    </location>
</feature>
<feature type="helix" evidence="11">
    <location>
        <begin position="185"/>
        <end position="202"/>
    </location>
</feature>
<feature type="turn" evidence="11">
    <location>
        <begin position="203"/>
        <end position="207"/>
    </location>
</feature>
<feature type="helix" evidence="11">
    <location>
        <begin position="212"/>
        <end position="226"/>
    </location>
</feature>
<feature type="helix" evidence="11">
    <location>
        <begin position="235"/>
        <end position="251"/>
    </location>
</feature>
<feature type="helix" evidence="11">
    <location>
        <begin position="259"/>
        <end position="264"/>
    </location>
</feature>
<feature type="strand" evidence="11">
    <location>
        <begin position="267"/>
        <end position="272"/>
    </location>
</feature>
<feature type="strand" evidence="11">
    <location>
        <begin position="275"/>
        <end position="278"/>
    </location>
</feature>
<feature type="strand" evidence="11">
    <location>
        <begin position="280"/>
        <end position="289"/>
    </location>
</feature>
<feature type="helix" evidence="11">
    <location>
        <begin position="291"/>
        <end position="297"/>
    </location>
</feature>
<feature type="helix" evidence="11">
    <location>
        <begin position="301"/>
        <end position="314"/>
    </location>
</feature>
<feature type="strand" evidence="11">
    <location>
        <begin position="318"/>
        <end position="328"/>
    </location>
</feature>
<feature type="strand" evidence="11">
    <location>
        <begin position="331"/>
        <end position="340"/>
    </location>
</feature>
<feature type="helix" evidence="11">
    <location>
        <begin position="342"/>
        <end position="356"/>
    </location>
</feature>
<feature type="strand" evidence="11">
    <location>
        <begin position="358"/>
        <end position="364"/>
    </location>
</feature>
<feature type="helix" evidence="11">
    <location>
        <begin position="365"/>
        <end position="367"/>
    </location>
</feature>
<feature type="strand" evidence="11">
    <location>
        <begin position="369"/>
        <end position="374"/>
    </location>
</feature>
<feature type="helix" evidence="11">
    <location>
        <begin position="381"/>
        <end position="393"/>
    </location>
</feature>
<accession>P38698</accession>
<accession>D3DLF0</accession>
<organism>
    <name type="scientific">Saccharomyces cerevisiae (strain ATCC 204508 / S288c)</name>
    <name type="common">Baker's yeast</name>
    <dbReference type="NCBI Taxonomy" id="559292"/>
    <lineage>
        <taxon>Eukaryota</taxon>
        <taxon>Fungi</taxon>
        <taxon>Dikarya</taxon>
        <taxon>Ascomycota</taxon>
        <taxon>Saccharomycotina</taxon>
        <taxon>Saccharomycetes</taxon>
        <taxon>Saccharomycetales</taxon>
        <taxon>Saccharomycetaceae</taxon>
        <taxon>Saccharomyces</taxon>
    </lineage>
</organism>